<comment type="function">
    <text evidence="1">Involved in the regulation of the perinuclear actin network and nuclear shape through interaction with filamins. Plays an essential role in actin cytoskeleton formation in developing cartilaginous cells.</text>
</comment>
<comment type="subunit">
    <text evidence="1">Interacts with FLNA and FLNB.</text>
</comment>
<comment type="interaction">
    <interactant intactId="EBI-10200920">
        <id>Q6ZTI6</id>
    </interactant>
    <interactant intactId="EBI-9641086">
        <id>P21333-2</id>
        <label>FLNA</label>
    </interactant>
    <organismsDiffer>false</organismsDiffer>
    <experiments>3</experiments>
</comment>
<comment type="interaction">
    <interactant intactId="EBI-12362431">
        <id>Q6ZTI6-2</id>
    </interactant>
    <interactant intactId="EBI-9641086">
        <id>P21333-2</id>
        <label>FLNA</label>
    </interactant>
    <organismsDiffer>false</organismsDiffer>
    <experiments>3</experiments>
</comment>
<comment type="subcellular location">
    <subcellularLocation>
        <location evidence="1">Cytoplasm</location>
        <location evidence="1">Cytoskeleton</location>
    </subcellularLocation>
    <text evidence="1">Colocalizes with FLNA along actin bundle-like structures.</text>
</comment>
<comment type="alternative products">
    <event type="alternative splicing"/>
    <isoform>
        <id>Q6ZTI6-1</id>
        <name>1</name>
        <sequence type="displayed"/>
    </isoform>
    <isoform>
        <id>Q6ZTI6-2</id>
        <name>2</name>
        <sequence type="described" ref="VSP_022713"/>
    </isoform>
</comment>
<comment type="similarity">
    <text evidence="4">Belongs to the Refilin family.</text>
</comment>
<feature type="chain" id="PRO_0000274331" description="Refilin-A">
    <location>
        <begin position="1"/>
        <end position="216"/>
    </location>
</feature>
<feature type="region of interest" description="Disordered" evidence="2">
    <location>
        <begin position="1"/>
        <end position="83"/>
    </location>
</feature>
<feature type="compositionally biased region" description="Basic and acidic residues" evidence="2">
    <location>
        <begin position="12"/>
        <end position="22"/>
    </location>
</feature>
<feature type="compositionally biased region" description="Pro residues" evidence="2">
    <location>
        <begin position="29"/>
        <end position="39"/>
    </location>
</feature>
<feature type="compositionally biased region" description="Low complexity" evidence="2">
    <location>
        <begin position="57"/>
        <end position="71"/>
    </location>
</feature>
<feature type="modified residue" description="Asymmetric dimethylarginine" evidence="1">
    <location>
        <position position="163"/>
    </location>
</feature>
<feature type="splice variant" id="VSP_022713" description="In isoform 2." evidence="3">
    <location>
        <begin position="1"/>
        <end position="81"/>
    </location>
</feature>
<feature type="sequence conflict" description="In Ref. 2; BAC86601." evidence="4" ref="2">
    <original>N</original>
    <variation>S</variation>
    <location>
        <position position="98"/>
    </location>
</feature>
<evidence type="ECO:0000250" key="1">
    <source>
        <dbReference type="UniProtKB" id="Q7TS73"/>
    </source>
</evidence>
<evidence type="ECO:0000256" key="2">
    <source>
        <dbReference type="SAM" id="MobiDB-lite"/>
    </source>
</evidence>
<evidence type="ECO:0000303" key="3">
    <source>
    </source>
</evidence>
<evidence type="ECO:0000305" key="4"/>
<evidence type="ECO:0000312" key="5">
    <source>
        <dbReference type="HGNC" id="HGNC:27051"/>
    </source>
</evidence>
<organism>
    <name type="scientific">Homo sapiens</name>
    <name type="common">Human</name>
    <dbReference type="NCBI Taxonomy" id="9606"/>
    <lineage>
        <taxon>Eukaryota</taxon>
        <taxon>Metazoa</taxon>
        <taxon>Chordata</taxon>
        <taxon>Craniata</taxon>
        <taxon>Vertebrata</taxon>
        <taxon>Euteleostomi</taxon>
        <taxon>Mammalia</taxon>
        <taxon>Eutheria</taxon>
        <taxon>Euarchontoglires</taxon>
        <taxon>Primates</taxon>
        <taxon>Haplorrhini</taxon>
        <taxon>Catarrhini</taxon>
        <taxon>Hominidae</taxon>
        <taxon>Homo</taxon>
    </lineage>
</organism>
<keyword id="KW-0025">Alternative splicing</keyword>
<keyword id="KW-0963">Cytoplasm</keyword>
<keyword id="KW-0206">Cytoskeleton</keyword>
<keyword id="KW-0488">Methylation</keyword>
<keyword id="KW-1267">Proteomics identification</keyword>
<keyword id="KW-1185">Reference proteome</keyword>
<accession>Q6ZTI6</accession>
<accession>A5D8T5</accession>
<reference key="1">
    <citation type="journal article" date="2006" name="Nature">
        <title>The finished DNA sequence of human chromosome 12.</title>
        <authorList>
            <person name="Scherer S.E."/>
            <person name="Muzny D.M."/>
            <person name="Buhay C.J."/>
            <person name="Chen R."/>
            <person name="Cree A."/>
            <person name="Ding Y."/>
            <person name="Dugan-Rocha S."/>
            <person name="Gill R."/>
            <person name="Gunaratne P."/>
            <person name="Harris R.A."/>
            <person name="Hawes A.C."/>
            <person name="Hernandez J."/>
            <person name="Hodgson A.V."/>
            <person name="Hume J."/>
            <person name="Jackson A."/>
            <person name="Khan Z.M."/>
            <person name="Kovar-Smith C."/>
            <person name="Lewis L.R."/>
            <person name="Lozado R.J."/>
            <person name="Metzker M.L."/>
            <person name="Milosavljevic A."/>
            <person name="Miner G.R."/>
            <person name="Montgomery K.T."/>
            <person name="Morgan M.B."/>
            <person name="Nazareth L.V."/>
            <person name="Scott G."/>
            <person name="Sodergren E."/>
            <person name="Song X.-Z."/>
            <person name="Steffen D."/>
            <person name="Lovering R.C."/>
            <person name="Wheeler D.A."/>
            <person name="Worley K.C."/>
            <person name="Yuan Y."/>
            <person name="Zhang Z."/>
            <person name="Adams C.Q."/>
            <person name="Ansari-Lari M.A."/>
            <person name="Ayele M."/>
            <person name="Brown M.J."/>
            <person name="Chen G."/>
            <person name="Chen Z."/>
            <person name="Clerc-Blankenburg K.P."/>
            <person name="Davis C."/>
            <person name="Delgado O."/>
            <person name="Dinh H.H."/>
            <person name="Draper H."/>
            <person name="Gonzalez-Garay M.L."/>
            <person name="Havlak P."/>
            <person name="Jackson L.R."/>
            <person name="Jacob L.S."/>
            <person name="Kelly S.H."/>
            <person name="Li L."/>
            <person name="Li Z."/>
            <person name="Liu J."/>
            <person name="Liu W."/>
            <person name="Lu J."/>
            <person name="Maheshwari M."/>
            <person name="Nguyen B.-V."/>
            <person name="Okwuonu G.O."/>
            <person name="Pasternak S."/>
            <person name="Perez L.M."/>
            <person name="Plopper F.J.H."/>
            <person name="Santibanez J."/>
            <person name="Shen H."/>
            <person name="Tabor P.E."/>
            <person name="Verduzco D."/>
            <person name="Waldron L."/>
            <person name="Wang Q."/>
            <person name="Williams G.A."/>
            <person name="Zhang J."/>
            <person name="Zhou J."/>
            <person name="Allen C.C."/>
            <person name="Amin A.G."/>
            <person name="Anyalebechi V."/>
            <person name="Bailey M."/>
            <person name="Barbaria J.A."/>
            <person name="Bimage K.E."/>
            <person name="Bryant N.P."/>
            <person name="Burch P.E."/>
            <person name="Burkett C.E."/>
            <person name="Burrell K.L."/>
            <person name="Calderon E."/>
            <person name="Cardenas V."/>
            <person name="Carter K."/>
            <person name="Casias K."/>
            <person name="Cavazos I."/>
            <person name="Cavazos S.R."/>
            <person name="Ceasar H."/>
            <person name="Chacko J."/>
            <person name="Chan S.N."/>
            <person name="Chavez D."/>
            <person name="Christopoulos C."/>
            <person name="Chu J."/>
            <person name="Cockrell R."/>
            <person name="Cox C.D."/>
            <person name="Dang M."/>
            <person name="Dathorne S.R."/>
            <person name="David R."/>
            <person name="Davis C.M."/>
            <person name="Davy-Carroll L."/>
            <person name="Deshazo D.R."/>
            <person name="Donlin J.E."/>
            <person name="D'Souza L."/>
            <person name="Eaves K.A."/>
            <person name="Egan A."/>
            <person name="Emery-Cohen A.J."/>
            <person name="Escotto M."/>
            <person name="Flagg N."/>
            <person name="Forbes L.D."/>
            <person name="Gabisi A.M."/>
            <person name="Garza M."/>
            <person name="Hamilton C."/>
            <person name="Henderson N."/>
            <person name="Hernandez O."/>
            <person name="Hines S."/>
            <person name="Hogues M.E."/>
            <person name="Huang M."/>
            <person name="Idlebird D.G."/>
            <person name="Johnson R."/>
            <person name="Jolivet A."/>
            <person name="Jones S."/>
            <person name="Kagan R."/>
            <person name="King L.M."/>
            <person name="Leal B."/>
            <person name="Lebow H."/>
            <person name="Lee S."/>
            <person name="LeVan J.M."/>
            <person name="Lewis L.C."/>
            <person name="London P."/>
            <person name="Lorensuhewa L.M."/>
            <person name="Loulseged H."/>
            <person name="Lovett D.A."/>
            <person name="Lucier A."/>
            <person name="Lucier R.L."/>
            <person name="Ma J."/>
            <person name="Madu R.C."/>
            <person name="Mapua P."/>
            <person name="Martindale A.D."/>
            <person name="Martinez E."/>
            <person name="Massey E."/>
            <person name="Mawhiney S."/>
            <person name="Meador M.G."/>
            <person name="Mendez S."/>
            <person name="Mercado C."/>
            <person name="Mercado I.C."/>
            <person name="Merritt C.E."/>
            <person name="Miner Z.L."/>
            <person name="Minja E."/>
            <person name="Mitchell T."/>
            <person name="Mohabbat F."/>
            <person name="Mohabbat K."/>
            <person name="Montgomery B."/>
            <person name="Moore N."/>
            <person name="Morris S."/>
            <person name="Munidasa M."/>
            <person name="Ngo R.N."/>
            <person name="Nguyen N.B."/>
            <person name="Nickerson E."/>
            <person name="Nwaokelemeh O.O."/>
            <person name="Nwokenkwo S."/>
            <person name="Obregon M."/>
            <person name="Oguh M."/>
            <person name="Oragunye N."/>
            <person name="Oviedo R.J."/>
            <person name="Parish B.J."/>
            <person name="Parker D.N."/>
            <person name="Parrish J."/>
            <person name="Parks K.L."/>
            <person name="Paul H.A."/>
            <person name="Payton B.A."/>
            <person name="Perez A."/>
            <person name="Perrin W."/>
            <person name="Pickens A."/>
            <person name="Primus E.L."/>
            <person name="Pu L.-L."/>
            <person name="Puazo M."/>
            <person name="Quiles M.M."/>
            <person name="Quiroz J.B."/>
            <person name="Rabata D."/>
            <person name="Reeves K."/>
            <person name="Ruiz S.J."/>
            <person name="Shao H."/>
            <person name="Sisson I."/>
            <person name="Sonaike T."/>
            <person name="Sorelle R.P."/>
            <person name="Sutton A.E."/>
            <person name="Svatek A.F."/>
            <person name="Svetz L.A."/>
            <person name="Tamerisa K.S."/>
            <person name="Taylor T.R."/>
            <person name="Teague B."/>
            <person name="Thomas N."/>
            <person name="Thorn R.D."/>
            <person name="Trejos Z.Y."/>
            <person name="Trevino B.K."/>
            <person name="Ukegbu O.N."/>
            <person name="Urban J.B."/>
            <person name="Vasquez L.I."/>
            <person name="Vera V.A."/>
            <person name="Villasana D.M."/>
            <person name="Wang L."/>
            <person name="Ward-Moore S."/>
            <person name="Warren J.T."/>
            <person name="Wei X."/>
            <person name="White F."/>
            <person name="Williamson A.L."/>
            <person name="Wleczyk R."/>
            <person name="Wooden H.S."/>
            <person name="Wooden S.H."/>
            <person name="Yen J."/>
            <person name="Yoon L."/>
            <person name="Yoon V."/>
            <person name="Zorrilla S.E."/>
            <person name="Nelson D."/>
            <person name="Kucherlapati R."/>
            <person name="Weinstock G."/>
            <person name="Gibbs R.A."/>
        </authorList>
    </citation>
    <scope>NUCLEOTIDE SEQUENCE [LARGE SCALE GENOMIC DNA]</scope>
</reference>
<reference key="2">
    <citation type="journal article" date="2004" name="Nat. Genet.">
        <title>Complete sequencing and characterization of 21,243 full-length human cDNAs.</title>
        <authorList>
            <person name="Ota T."/>
            <person name="Suzuki Y."/>
            <person name="Nishikawa T."/>
            <person name="Otsuki T."/>
            <person name="Sugiyama T."/>
            <person name="Irie R."/>
            <person name="Wakamatsu A."/>
            <person name="Hayashi K."/>
            <person name="Sato H."/>
            <person name="Nagai K."/>
            <person name="Kimura K."/>
            <person name="Makita H."/>
            <person name="Sekine M."/>
            <person name="Obayashi M."/>
            <person name="Nishi T."/>
            <person name="Shibahara T."/>
            <person name="Tanaka T."/>
            <person name="Ishii S."/>
            <person name="Yamamoto J."/>
            <person name="Saito K."/>
            <person name="Kawai Y."/>
            <person name="Isono Y."/>
            <person name="Nakamura Y."/>
            <person name="Nagahari K."/>
            <person name="Murakami K."/>
            <person name="Yasuda T."/>
            <person name="Iwayanagi T."/>
            <person name="Wagatsuma M."/>
            <person name="Shiratori A."/>
            <person name="Sudo H."/>
            <person name="Hosoiri T."/>
            <person name="Kaku Y."/>
            <person name="Kodaira H."/>
            <person name="Kondo H."/>
            <person name="Sugawara M."/>
            <person name="Takahashi M."/>
            <person name="Kanda K."/>
            <person name="Yokoi T."/>
            <person name="Furuya T."/>
            <person name="Kikkawa E."/>
            <person name="Omura Y."/>
            <person name="Abe K."/>
            <person name="Kamihara K."/>
            <person name="Katsuta N."/>
            <person name="Sato K."/>
            <person name="Tanikawa M."/>
            <person name="Yamazaki M."/>
            <person name="Ninomiya K."/>
            <person name="Ishibashi T."/>
            <person name="Yamashita H."/>
            <person name="Murakawa K."/>
            <person name="Fujimori K."/>
            <person name="Tanai H."/>
            <person name="Kimata M."/>
            <person name="Watanabe M."/>
            <person name="Hiraoka S."/>
            <person name="Chiba Y."/>
            <person name="Ishida S."/>
            <person name="Ono Y."/>
            <person name="Takiguchi S."/>
            <person name="Watanabe S."/>
            <person name="Yosida M."/>
            <person name="Hotuta T."/>
            <person name="Kusano J."/>
            <person name="Kanehori K."/>
            <person name="Takahashi-Fujii A."/>
            <person name="Hara H."/>
            <person name="Tanase T.-O."/>
            <person name="Nomura Y."/>
            <person name="Togiya S."/>
            <person name="Komai F."/>
            <person name="Hara R."/>
            <person name="Takeuchi K."/>
            <person name="Arita M."/>
            <person name="Imose N."/>
            <person name="Musashino K."/>
            <person name="Yuuki H."/>
            <person name="Oshima A."/>
            <person name="Sasaki N."/>
            <person name="Aotsuka S."/>
            <person name="Yoshikawa Y."/>
            <person name="Matsunawa H."/>
            <person name="Ichihara T."/>
            <person name="Shiohata N."/>
            <person name="Sano S."/>
            <person name="Moriya S."/>
            <person name="Momiyama H."/>
            <person name="Satoh N."/>
            <person name="Takami S."/>
            <person name="Terashima Y."/>
            <person name="Suzuki O."/>
            <person name="Nakagawa S."/>
            <person name="Senoh A."/>
            <person name="Mizoguchi H."/>
            <person name="Goto Y."/>
            <person name="Shimizu F."/>
            <person name="Wakebe H."/>
            <person name="Hishigaki H."/>
            <person name="Watanabe T."/>
            <person name="Sugiyama A."/>
            <person name="Takemoto M."/>
            <person name="Kawakami B."/>
            <person name="Yamazaki M."/>
            <person name="Watanabe K."/>
            <person name="Kumagai A."/>
            <person name="Itakura S."/>
            <person name="Fukuzumi Y."/>
            <person name="Fujimori Y."/>
            <person name="Komiyama M."/>
            <person name="Tashiro H."/>
            <person name="Tanigami A."/>
            <person name="Fujiwara T."/>
            <person name="Ono T."/>
            <person name="Yamada K."/>
            <person name="Fujii Y."/>
            <person name="Ozaki K."/>
            <person name="Hirao M."/>
            <person name="Ohmori Y."/>
            <person name="Kawabata A."/>
            <person name="Hikiji T."/>
            <person name="Kobatake N."/>
            <person name="Inagaki H."/>
            <person name="Ikema Y."/>
            <person name="Okamoto S."/>
            <person name="Okitani R."/>
            <person name="Kawakami T."/>
            <person name="Noguchi S."/>
            <person name="Itoh T."/>
            <person name="Shigeta K."/>
            <person name="Senba T."/>
            <person name="Matsumura K."/>
            <person name="Nakajima Y."/>
            <person name="Mizuno T."/>
            <person name="Morinaga M."/>
            <person name="Sasaki M."/>
            <person name="Togashi T."/>
            <person name="Oyama M."/>
            <person name="Hata H."/>
            <person name="Watanabe M."/>
            <person name="Komatsu T."/>
            <person name="Mizushima-Sugano J."/>
            <person name="Satoh T."/>
            <person name="Shirai Y."/>
            <person name="Takahashi Y."/>
            <person name="Nakagawa K."/>
            <person name="Okumura K."/>
            <person name="Nagase T."/>
            <person name="Nomura N."/>
            <person name="Kikuchi H."/>
            <person name="Masuho Y."/>
            <person name="Yamashita R."/>
            <person name="Nakai K."/>
            <person name="Yada T."/>
            <person name="Nakamura Y."/>
            <person name="Ohara O."/>
            <person name="Isogai T."/>
            <person name="Sugano S."/>
        </authorList>
    </citation>
    <scope>NUCLEOTIDE SEQUENCE [LARGE SCALE MRNA] (ISOFORM 2)</scope>
    <source>
        <tissue>Cerebellum</tissue>
    </source>
</reference>
<reference key="3">
    <citation type="journal article" date="2004" name="Genome Res.">
        <title>The status, quality, and expansion of the NIH full-length cDNA project: the Mammalian Gene Collection (MGC).</title>
        <authorList>
            <consortium name="The MGC Project Team"/>
        </authorList>
    </citation>
    <scope>NUCLEOTIDE SEQUENCE [LARGE SCALE MRNA] OF 79-216</scope>
</reference>
<name>RFLA_HUMAN</name>
<dbReference type="EMBL" id="AC073916">
    <property type="status" value="NOT_ANNOTATED_CDS"/>
    <property type="molecule type" value="Genomic_DNA"/>
</dbReference>
<dbReference type="EMBL" id="AK126577">
    <property type="protein sequence ID" value="BAC86601.1"/>
    <property type="molecule type" value="mRNA"/>
</dbReference>
<dbReference type="EMBL" id="BC141805">
    <property type="protein sequence ID" value="AAI41806.1"/>
    <property type="molecule type" value="mRNA"/>
</dbReference>
<dbReference type="CCDS" id="CCDS91768.1">
    <molecule id="Q6ZTI6-1"/>
</dbReference>
<dbReference type="RefSeq" id="NP_001191228.1">
    <molecule id="Q6ZTI6-2"/>
    <property type="nucleotide sequence ID" value="NM_001204299.2"/>
</dbReference>
<dbReference type="RefSeq" id="NP_001334831.1">
    <molecule id="Q6ZTI6-2"/>
    <property type="nucleotide sequence ID" value="NM_001347902.1"/>
</dbReference>
<dbReference type="RefSeq" id="NP_001352085.1">
    <molecule id="Q6ZTI6-1"/>
    <property type="nucleotide sequence ID" value="NM_001365156.1"/>
</dbReference>
<dbReference type="RefSeq" id="NP_859060.3">
    <molecule id="Q6ZTI6-2"/>
    <property type="nucleotide sequence ID" value="NM_181709.4"/>
</dbReference>
<dbReference type="BioGRID" id="126843">
    <property type="interactions" value="2"/>
</dbReference>
<dbReference type="BioGRID" id="1529428">
    <property type="interactions" value="1"/>
</dbReference>
<dbReference type="FunCoup" id="Q6ZTI6">
    <property type="interactions" value="26"/>
</dbReference>
<dbReference type="IntAct" id="Q6ZTI6">
    <property type="interactions" value="1"/>
</dbReference>
<dbReference type="STRING" id="9606.ENSP00000374377"/>
<dbReference type="GlyGen" id="Q6ZTI6">
    <property type="glycosylation" value="1 site, 1 O-linked glycan (1 site)"/>
</dbReference>
<dbReference type="PhosphoSitePlus" id="Q6ZTI6"/>
<dbReference type="BioMuta" id="RFLNA"/>
<dbReference type="jPOST" id="Q6ZTI6"/>
<dbReference type="MassIVE" id="Q6ZTI6"/>
<dbReference type="PaxDb" id="9606-ENSP00000374377"/>
<dbReference type="PeptideAtlas" id="Q6ZTI6"/>
<dbReference type="ProteomicsDB" id="68275">
    <molecule id="Q6ZTI6-1"/>
</dbReference>
<dbReference type="ProteomicsDB" id="68276">
    <molecule id="Q6ZTI6-2"/>
</dbReference>
<dbReference type="Antibodypedia" id="31861">
    <property type="antibodies" value="104 antibodies from 21 providers"/>
</dbReference>
<dbReference type="DNASU" id="144347"/>
<dbReference type="Ensembl" id="ENST00000324038.6">
    <molecule id="Q6ZTI6-2"/>
    <property type="protein sequence ID" value="ENSP00000315626.3"/>
    <property type="gene ID" value="ENSG00000178882.15"/>
</dbReference>
<dbReference type="Ensembl" id="ENST00000338359.4">
    <molecule id="Q6ZTI6-2"/>
    <property type="protein sequence ID" value="ENSP00000345898.4"/>
    <property type="gene ID" value="ENSG00000178882.15"/>
</dbReference>
<dbReference type="Ensembl" id="ENST00000389727.8">
    <molecule id="Q6ZTI6-2"/>
    <property type="protein sequence ID" value="ENSP00000374377.4"/>
    <property type="gene ID" value="ENSG00000178882.15"/>
</dbReference>
<dbReference type="Ensembl" id="ENST00000546355.4">
    <molecule id="Q6ZTI6-1"/>
    <property type="protein sequence ID" value="ENSP00000444080.2"/>
    <property type="gene ID" value="ENSG00000178882.15"/>
</dbReference>
<dbReference type="GeneID" id="144347"/>
<dbReference type="KEGG" id="hsa:100533183"/>
<dbReference type="KEGG" id="hsa:144347"/>
<dbReference type="MANE-Select" id="ENST00000546355.4">
    <property type="protein sequence ID" value="ENSP00000444080.2"/>
    <property type="RefSeq nucleotide sequence ID" value="NM_001365156.1"/>
    <property type="RefSeq protein sequence ID" value="NP_001352085.1"/>
</dbReference>
<dbReference type="UCSC" id="uc001ugd.3">
    <molecule id="Q6ZTI6-1"/>
    <property type="organism name" value="human"/>
</dbReference>
<dbReference type="AGR" id="HGNC:27051"/>
<dbReference type="CTD" id="100533183"/>
<dbReference type="CTD" id="144347"/>
<dbReference type="DisGeNET" id="100533183"/>
<dbReference type="DisGeNET" id="144347"/>
<dbReference type="GeneCards" id="RFLNA"/>
<dbReference type="HGNC" id="HGNC:27051">
    <property type="gene designation" value="RFLNA"/>
</dbReference>
<dbReference type="HPA" id="ENSG00000178882">
    <property type="expression patterns" value="Tissue enriched (stomach)"/>
</dbReference>
<dbReference type="MIM" id="615927">
    <property type="type" value="gene"/>
</dbReference>
<dbReference type="neXtProt" id="NX_Q6ZTI6"/>
<dbReference type="OpenTargets" id="ENSG00000178882"/>
<dbReference type="PharmGKB" id="PA143485462"/>
<dbReference type="VEuPathDB" id="HostDB:ENSG00000178882"/>
<dbReference type="eggNOG" id="ENOG502QQHM">
    <property type="taxonomic scope" value="Eukaryota"/>
</dbReference>
<dbReference type="GeneTree" id="ENSGT00390000016836"/>
<dbReference type="HOGENOM" id="CLU_107206_1_0_1"/>
<dbReference type="InParanoid" id="Q6ZTI6"/>
<dbReference type="OMA" id="AKDGKVM"/>
<dbReference type="PAN-GO" id="Q6ZTI6">
    <property type="GO annotations" value="6 GO annotations based on evolutionary models"/>
</dbReference>
<dbReference type="PhylomeDB" id="Q6ZTI6"/>
<dbReference type="TreeFam" id="TF332387"/>
<dbReference type="PathwayCommons" id="Q6ZTI6"/>
<dbReference type="SignaLink" id="Q6ZTI6"/>
<dbReference type="BioGRID-ORCS" id="100533183">
    <property type="hits" value="1 hit in 37 CRISPR screens"/>
</dbReference>
<dbReference type="BioGRID-ORCS" id="144347">
    <property type="hits" value="15 hits in 1134 CRISPR screens"/>
</dbReference>
<dbReference type="Pharos" id="Q6ZTI6">
    <property type="development level" value="Tbio"/>
</dbReference>
<dbReference type="PRO" id="PR:Q6ZTI6"/>
<dbReference type="Proteomes" id="UP000005640">
    <property type="component" value="Chromosome 12"/>
</dbReference>
<dbReference type="RNAct" id="Q6ZTI6">
    <property type="molecule type" value="protein"/>
</dbReference>
<dbReference type="Bgee" id="ENSG00000178882">
    <property type="expression patterns" value="Expressed in ileal mucosa and 112 other cell types or tissues"/>
</dbReference>
<dbReference type="GO" id="GO:0032432">
    <property type="term" value="C:actin filament bundle"/>
    <property type="evidence" value="ECO:0000318"/>
    <property type="project" value="GO_Central"/>
</dbReference>
<dbReference type="GO" id="GO:0005737">
    <property type="term" value="C:cytoplasm"/>
    <property type="evidence" value="ECO:0007669"/>
    <property type="project" value="UniProtKB-KW"/>
</dbReference>
<dbReference type="GO" id="GO:0031005">
    <property type="term" value="F:filamin binding"/>
    <property type="evidence" value="ECO:0000318"/>
    <property type="project" value="GO_Central"/>
</dbReference>
<dbReference type="GO" id="GO:0061572">
    <property type="term" value="P:actin filament bundle organization"/>
    <property type="evidence" value="ECO:0000318"/>
    <property type="project" value="GO_Central"/>
</dbReference>
<dbReference type="GO" id="GO:1900158">
    <property type="term" value="P:negative regulation of bone mineralization involved in bone maturation"/>
    <property type="evidence" value="ECO:0000318"/>
    <property type="project" value="GO_Central"/>
</dbReference>
<dbReference type="GO" id="GO:0061182">
    <property type="term" value="P:negative regulation of chondrocyte development"/>
    <property type="evidence" value="ECO:0000318"/>
    <property type="project" value="GO_Central"/>
</dbReference>
<dbReference type="GO" id="GO:0048705">
    <property type="term" value="P:skeletal system morphogenesis"/>
    <property type="evidence" value="ECO:0000318"/>
    <property type="project" value="GO_Central"/>
</dbReference>
<dbReference type="InterPro" id="IPR028215">
    <property type="entry name" value="Refilin"/>
</dbReference>
<dbReference type="PANTHER" id="PTHR31848">
    <property type="match status" value="1"/>
</dbReference>
<dbReference type="PANTHER" id="PTHR31848:SF0">
    <property type="entry name" value="REFILIN-A"/>
    <property type="match status" value="1"/>
</dbReference>
<dbReference type="Pfam" id="PF15068">
    <property type="entry name" value="FAM101"/>
    <property type="match status" value="1"/>
</dbReference>
<gene>
    <name evidence="5" type="primary">RFLNA</name>
    <name type="synonym">FAM101A</name>
</gene>
<protein>
    <recommendedName>
        <fullName>Refilin-A</fullName>
    </recommendedName>
    <alternativeName>
        <fullName>Regulator of filamin protein A</fullName>
        <shortName>RefilinA</shortName>
    </alternativeName>
</protein>
<sequence>MVGHLHLQGMEDSLKEQGREGLLDSPDSGLPPSPSPSPPFYSLAPGILDARAGGAGASSEPPGPSEARAPPSQLPNPPASEMRPRMLPVFFGESIKVNPEPTHEIRCNSEVKYASEKHFQDKVFYAPVPTVTAYSETIVAAPNCTWRNYRSQLTLEPRPRALRFRSTTIIFPKHARSTFRTTLHCSLGRPSRWFTASVQLQLCQDPAPSLLGPATL</sequence>
<proteinExistence type="evidence at protein level"/>